<evidence type="ECO:0000255" key="1">
    <source>
        <dbReference type="HAMAP-Rule" id="MF_00232"/>
    </source>
</evidence>
<keyword id="KW-0396">Initiation factor</keyword>
<keyword id="KW-0648">Protein biosynthesis</keyword>
<name>IF2B_SACI4</name>
<proteinExistence type="inferred from homology"/>
<sequence length="139" mass="15938">MSSEKEYVEMLDRLYSKLPEKGRKEGTQALPNLIIFNIGNTTMIRNFAEYCDRIRREDKICMKYLLKELAAPGNVDDKGELIIQGKFSSQVINTLMERFLKAYVECSTCKSLDTVLKKEKKSWYIVCLACGAQTPVKPL</sequence>
<reference key="1">
    <citation type="journal article" date="2009" name="Proc. Natl. Acad. Sci. U.S.A.">
        <title>Biogeography of the Sulfolobus islandicus pan-genome.</title>
        <authorList>
            <person name="Reno M.L."/>
            <person name="Held N.L."/>
            <person name="Fields C.J."/>
            <person name="Burke P.V."/>
            <person name="Whitaker R.J."/>
        </authorList>
    </citation>
    <scope>NUCLEOTIDE SEQUENCE [LARGE SCALE GENOMIC DNA]</scope>
    <source>
        <strain>M.14.25 / Kamchatka #1</strain>
    </source>
</reference>
<comment type="function">
    <text evidence="1">eIF-2 functions in the early steps of protein synthesis by forming a ternary complex with GTP and initiator tRNA.</text>
</comment>
<comment type="subunit">
    <text evidence="1">Heterotrimer composed of an alpha, a beta and a gamma chain.</text>
</comment>
<comment type="similarity">
    <text evidence="1">Belongs to the eIF-2-beta/eIF-5 family.</text>
</comment>
<dbReference type="EMBL" id="CP001400">
    <property type="protein sequence ID" value="ACP37066.1"/>
    <property type="molecule type" value="Genomic_DNA"/>
</dbReference>
<dbReference type="SMR" id="C3MU32"/>
<dbReference type="KEGG" id="sia:M1425_0175"/>
<dbReference type="HOGENOM" id="CLU_026663_3_1_2"/>
<dbReference type="Proteomes" id="UP000001350">
    <property type="component" value="Chromosome"/>
</dbReference>
<dbReference type="GO" id="GO:0003743">
    <property type="term" value="F:translation initiation factor activity"/>
    <property type="evidence" value="ECO:0007669"/>
    <property type="project" value="UniProtKB-UniRule"/>
</dbReference>
<dbReference type="FunFam" id="3.30.30.170:FF:000001">
    <property type="entry name" value="Eukaryotic translation initiation factor 2 subunit"/>
    <property type="match status" value="1"/>
</dbReference>
<dbReference type="Gene3D" id="3.30.30.170">
    <property type="match status" value="1"/>
</dbReference>
<dbReference type="HAMAP" id="MF_00232">
    <property type="entry name" value="eIF_2_beta"/>
    <property type="match status" value="1"/>
</dbReference>
<dbReference type="InterPro" id="IPR045196">
    <property type="entry name" value="IF2/IF5"/>
</dbReference>
<dbReference type="InterPro" id="IPR004458">
    <property type="entry name" value="TIF2_bsu_arc"/>
</dbReference>
<dbReference type="InterPro" id="IPR002735">
    <property type="entry name" value="Transl_init_fac_IF2/IF5_dom"/>
</dbReference>
<dbReference type="InterPro" id="IPR016189">
    <property type="entry name" value="Transl_init_fac_IF2/IF5_N"/>
</dbReference>
<dbReference type="InterPro" id="IPR016190">
    <property type="entry name" value="Transl_init_fac_IF2/IF5_Zn-bd"/>
</dbReference>
<dbReference type="NCBIfam" id="NF003067">
    <property type="entry name" value="PRK03988.1"/>
    <property type="match status" value="1"/>
</dbReference>
<dbReference type="PANTHER" id="PTHR23001">
    <property type="entry name" value="EUKARYOTIC TRANSLATION INITIATION FACTOR"/>
    <property type="match status" value="1"/>
</dbReference>
<dbReference type="PANTHER" id="PTHR23001:SF3">
    <property type="entry name" value="EUKARYOTIC TRANSLATION INITIATION FACTOR 2 SUBUNIT 2"/>
    <property type="match status" value="1"/>
</dbReference>
<dbReference type="Pfam" id="PF01873">
    <property type="entry name" value="eIF-5_eIF-2B"/>
    <property type="match status" value="1"/>
</dbReference>
<dbReference type="SMART" id="SM00653">
    <property type="entry name" value="eIF2B_5"/>
    <property type="match status" value="1"/>
</dbReference>
<dbReference type="SUPFAM" id="SSF100966">
    <property type="entry name" value="Translation initiation factor 2 beta, aIF2beta, N-terminal domain"/>
    <property type="match status" value="1"/>
</dbReference>
<dbReference type="SUPFAM" id="SSF75689">
    <property type="entry name" value="Zinc-binding domain of translation initiation factor 2 beta"/>
    <property type="match status" value="1"/>
</dbReference>
<protein>
    <recommendedName>
        <fullName evidence="1">Translation initiation factor 2 subunit beta</fullName>
    </recommendedName>
    <alternativeName>
        <fullName evidence="1">aIF2-beta</fullName>
    </alternativeName>
    <alternativeName>
        <fullName evidence="1">eIF-2-beta</fullName>
    </alternativeName>
</protein>
<feature type="chain" id="PRO_1000204380" description="Translation initiation factor 2 subunit beta">
    <location>
        <begin position="1"/>
        <end position="139"/>
    </location>
</feature>
<organism>
    <name type="scientific">Saccharolobus islandicus (strain M.14.25 / Kamchatka #1)</name>
    <name type="common">Sulfolobus islandicus</name>
    <dbReference type="NCBI Taxonomy" id="427317"/>
    <lineage>
        <taxon>Archaea</taxon>
        <taxon>Thermoproteota</taxon>
        <taxon>Thermoprotei</taxon>
        <taxon>Sulfolobales</taxon>
        <taxon>Sulfolobaceae</taxon>
        <taxon>Saccharolobus</taxon>
    </lineage>
</organism>
<gene>
    <name evidence="1" type="primary">eif2b</name>
    <name type="ordered locus">M1425_0175</name>
</gene>
<accession>C3MU32</accession>